<reference key="1">
    <citation type="journal article" date="2009" name="PLoS Biol.">
        <title>Lineage-specific biology revealed by a finished genome assembly of the mouse.</title>
        <authorList>
            <person name="Church D.M."/>
            <person name="Goodstadt L."/>
            <person name="Hillier L.W."/>
            <person name="Zody M.C."/>
            <person name="Goldstein S."/>
            <person name="She X."/>
            <person name="Bult C.J."/>
            <person name="Agarwala R."/>
            <person name="Cherry J.L."/>
            <person name="DiCuccio M."/>
            <person name="Hlavina W."/>
            <person name="Kapustin Y."/>
            <person name="Meric P."/>
            <person name="Maglott D."/>
            <person name="Birtle Z."/>
            <person name="Marques A.C."/>
            <person name="Graves T."/>
            <person name="Zhou S."/>
            <person name="Teague B."/>
            <person name="Potamousis K."/>
            <person name="Churas C."/>
            <person name="Place M."/>
            <person name="Herschleb J."/>
            <person name="Runnheim R."/>
            <person name="Forrest D."/>
            <person name="Amos-Landgraf J."/>
            <person name="Schwartz D.C."/>
            <person name="Cheng Z."/>
            <person name="Lindblad-Toh K."/>
            <person name="Eichler E.E."/>
            <person name="Ponting C.P."/>
        </authorList>
    </citation>
    <scope>NUCLEOTIDE SEQUENCE [LARGE SCALE GENOMIC DNA]</scope>
    <source>
        <strain>C57BL/6J</strain>
    </source>
</reference>
<reference key="2">
    <citation type="journal article" date="2004" name="Genome Res.">
        <title>The status, quality, and expansion of the NIH full-length cDNA project: the Mammalian Gene Collection (MGC).</title>
        <authorList>
            <consortium name="The MGC Project Team"/>
        </authorList>
    </citation>
    <scope>NUCLEOTIDE SEQUENCE [LARGE SCALE MRNA] OF 90-380</scope>
</reference>
<reference key="3">
    <citation type="journal article" date="2005" name="Science">
        <title>The transcriptional landscape of the mammalian genome.</title>
        <authorList>
            <person name="Carninci P."/>
            <person name="Kasukawa T."/>
            <person name="Katayama S."/>
            <person name="Gough J."/>
            <person name="Frith M.C."/>
            <person name="Maeda N."/>
            <person name="Oyama R."/>
            <person name="Ravasi T."/>
            <person name="Lenhard B."/>
            <person name="Wells C."/>
            <person name="Kodzius R."/>
            <person name="Shimokawa K."/>
            <person name="Bajic V.B."/>
            <person name="Brenner S.E."/>
            <person name="Batalov S."/>
            <person name="Forrest A.R."/>
            <person name="Zavolan M."/>
            <person name="Davis M.J."/>
            <person name="Wilming L.G."/>
            <person name="Aidinis V."/>
            <person name="Allen J.E."/>
            <person name="Ambesi-Impiombato A."/>
            <person name="Apweiler R."/>
            <person name="Aturaliya R.N."/>
            <person name="Bailey T.L."/>
            <person name="Bansal M."/>
            <person name="Baxter L."/>
            <person name="Beisel K.W."/>
            <person name="Bersano T."/>
            <person name="Bono H."/>
            <person name="Chalk A.M."/>
            <person name="Chiu K.P."/>
            <person name="Choudhary V."/>
            <person name="Christoffels A."/>
            <person name="Clutterbuck D.R."/>
            <person name="Crowe M.L."/>
            <person name="Dalla E."/>
            <person name="Dalrymple B.P."/>
            <person name="de Bono B."/>
            <person name="Della Gatta G."/>
            <person name="di Bernardo D."/>
            <person name="Down T."/>
            <person name="Engstrom P."/>
            <person name="Fagiolini M."/>
            <person name="Faulkner G."/>
            <person name="Fletcher C.F."/>
            <person name="Fukushima T."/>
            <person name="Furuno M."/>
            <person name="Futaki S."/>
            <person name="Gariboldi M."/>
            <person name="Georgii-Hemming P."/>
            <person name="Gingeras T.R."/>
            <person name="Gojobori T."/>
            <person name="Green R.E."/>
            <person name="Gustincich S."/>
            <person name="Harbers M."/>
            <person name="Hayashi Y."/>
            <person name="Hensch T.K."/>
            <person name="Hirokawa N."/>
            <person name="Hill D."/>
            <person name="Huminiecki L."/>
            <person name="Iacono M."/>
            <person name="Ikeo K."/>
            <person name="Iwama A."/>
            <person name="Ishikawa T."/>
            <person name="Jakt M."/>
            <person name="Kanapin A."/>
            <person name="Katoh M."/>
            <person name="Kawasawa Y."/>
            <person name="Kelso J."/>
            <person name="Kitamura H."/>
            <person name="Kitano H."/>
            <person name="Kollias G."/>
            <person name="Krishnan S.P."/>
            <person name="Kruger A."/>
            <person name="Kummerfeld S.K."/>
            <person name="Kurochkin I.V."/>
            <person name="Lareau L.F."/>
            <person name="Lazarevic D."/>
            <person name="Lipovich L."/>
            <person name="Liu J."/>
            <person name="Liuni S."/>
            <person name="McWilliam S."/>
            <person name="Madan Babu M."/>
            <person name="Madera M."/>
            <person name="Marchionni L."/>
            <person name="Matsuda H."/>
            <person name="Matsuzawa S."/>
            <person name="Miki H."/>
            <person name="Mignone F."/>
            <person name="Miyake S."/>
            <person name="Morris K."/>
            <person name="Mottagui-Tabar S."/>
            <person name="Mulder N."/>
            <person name="Nakano N."/>
            <person name="Nakauchi H."/>
            <person name="Ng P."/>
            <person name="Nilsson R."/>
            <person name="Nishiguchi S."/>
            <person name="Nishikawa S."/>
            <person name="Nori F."/>
            <person name="Ohara O."/>
            <person name="Okazaki Y."/>
            <person name="Orlando V."/>
            <person name="Pang K.C."/>
            <person name="Pavan W.J."/>
            <person name="Pavesi G."/>
            <person name="Pesole G."/>
            <person name="Petrovsky N."/>
            <person name="Piazza S."/>
            <person name="Reed J."/>
            <person name="Reid J.F."/>
            <person name="Ring B.Z."/>
            <person name="Ringwald M."/>
            <person name="Rost B."/>
            <person name="Ruan Y."/>
            <person name="Salzberg S.L."/>
            <person name="Sandelin A."/>
            <person name="Schneider C."/>
            <person name="Schoenbach C."/>
            <person name="Sekiguchi K."/>
            <person name="Semple C.A."/>
            <person name="Seno S."/>
            <person name="Sessa L."/>
            <person name="Sheng Y."/>
            <person name="Shibata Y."/>
            <person name="Shimada H."/>
            <person name="Shimada K."/>
            <person name="Silva D."/>
            <person name="Sinclair B."/>
            <person name="Sperling S."/>
            <person name="Stupka E."/>
            <person name="Sugiura K."/>
            <person name="Sultana R."/>
            <person name="Takenaka Y."/>
            <person name="Taki K."/>
            <person name="Tammoja K."/>
            <person name="Tan S.L."/>
            <person name="Tang S."/>
            <person name="Taylor M.S."/>
            <person name="Tegner J."/>
            <person name="Teichmann S.A."/>
            <person name="Ueda H.R."/>
            <person name="van Nimwegen E."/>
            <person name="Verardo R."/>
            <person name="Wei C.L."/>
            <person name="Yagi K."/>
            <person name="Yamanishi H."/>
            <person name="Zabarovsky E."/>
            <person name="Zhu S."/>
            <person name="Zimmer A."/>
            <person name="Hide W."/>
            <person name="Bult C."/>
            <person name="Grimmond S.M."/>
            <person name="Teasdale R.D."/>
            <person name="Liu E.T."/>
            <person name="Brusic V."/>
            <person name="Quackenbush J."/>
            <person name="Wahlestedt C."/>
            <person name="Mattick J.S."/>
            <person name="Hume D.A."/>
            <person name="Kai C."/>
            <person name="Sasaki D."/>
            <person name="Tomaru Y."/>
            <person name="Fukuda S."/>
            <person name="Kanamori-Katayama M."/>
            <person name="Suzuki M."/>
            <person name="Aoki J."/>
            <person name="Arakawa T."/>
            <person name="Iida J."/>
            <person name="Imamura K."/>
            <person name="Itoh M."/>
            <person name="Kato T."/>
            <person name="Kawaji H."/>
            <person name="Kawagashira N."/>
            <person name="Kawashima T."/>
            <person name="Kojima M."/>
            <person name="Kondo S."/>
            <person name="Konno H."/>
            <person name="Nakano K."/>
            <person name="Ninomiya N."/>
            <person name="Nishio T."/>
            <person name="Okada M."/>
            <person name="Plessy C."/>
            <person name="Shibata K."/>
            <person name="Shiraki T."/>
            <person name="Suzuki S."/>
            <person name="Tagami M."/>
            <person name="Waki K."/>
            <person name="Watahiki A."/>
            <person name="Okamura-Oho Y."/>
            <person name="Suzuki H."/>
            <person name="Kawai J."/>
            <person name="Hayashizaki Y."/>
        </authorList>
    </citation>
    <scope>NUCLEOTIDE SEQUENCE [LARGE SCALE MRNA] OF 103-227</scope>
</reference>
<reference key="4">
    <citation type="journal article" date="2004" name="Neuron">
        <title>Identification of PSD-95 palmitoylating enzymes.</title>
        <authorList>
            <person name="Fukata M."/>
            <person name="Fukata Y."/>
            <person name="Adesnik H."/>
            <person name="Nicoll R.A."/>
            <person name="Bredt D.S."/>
        </authorList>
    </citation>
    <scope>NUCLEOTIDE SEQUENCE [MRNA] OF 128-380</scope>
    <scope>FUNCTION</scope>
    <scope>CATALYTIC ACTIVITY</scope>
    <scope>TISSUE SPECIFICITY</scope>
    <source>
        <strain>C57BL/6J</strain>
        <tissue>Brain</tissue>
    </source>
</reference>
<reference key="5">
    <citation type="journal article" date="2009" name="Immunity">
        <title>The phagosomal proteome in interferon-gamma-activated macrophages.</title>
        <authorList>
            <person name="Trost M."/>
            <person name="English L."/>
            <person name="Lemieux S."/>
            <person name="Courcelles M."/>
            <person name="Desjardins M."/>
            <person name="Thibault P."/>
        </authorList>
    </citation>
    <scope>PHOSPHORYLATION [LARGE SCALE ANALYSIS] AT SER-19</scope>
    <scope>IDENTIFICATION BY MASS SPECTROMETRY [LARGE SCALE ANALYSIS]</scope>
</reference>
<reference key="6">
    <citation type="journal article" date="2022" name="EMBO J.">
        <title>ZDHHC18 negatively regulates cGAS-mediated innate immunity through palmitoylation.</title>
        <authorList>
            <person name="Shi C."/>
            <person name="Yang X."/>
            <person name="Liu Y."/>
            <person name="Li H."/>
            <person name="Chu H."/>
            <person name="Li G."/>
            <person name="Yin H."/>
        </authorList>
    </citation>
    <scope>FUNCTION</scope>
    <scope>DISRUPTION PHENOTYPE</scope>
</reference>
<evidence type="ECO:0000250" key="1">
    <source>
        <dbReference type="UniProtKB" id="Q8IUH5"/>
    </source>
</evidence>
<evidence type="ECO:0000250" key="2">
    <source>
        <dbReference type="UniProtKB" id="Q9NUE0"/>
    </source>
</evidence>
<evidence type="ECO:0000255" key="3"/>
<evidence type="ECO:0000255" key="4">
    <source>
        <dbReference type="PROSITE-ProRule" id="PRU00067"/>
    </source>
</evidence>
<evidence type="ECO:0000256" key="5">
    <source>
        <dbReference type="SAM" id="MobiDB-lite"/>
    </source>
</evidence>
<evidence type="ECO:0000269" key="6">
    <source>
    </source>
</evidence>
<evidence type="ECO:0000269" key="7">
    <source>
    </source>
</evidence>
<evidence type="ECO:0000303" key="8">
    <source>
    </source>
</evidence>
<evidence type="ECO:0000303" key="9">
    <source>
    </source>
</evidence>
<evidence type="ECO:0000305" key="10"/>
<evidence type="ECO:0000305" key="11">
    <source>
    </source>
</evidence>
<evidence type="ECO:0000312" key="12">
    <source>
        <dbReference type="MGI" id="MGI:3527792"/>
    </source>
</evidence>
<evidence type="ECO:0007744" key="13">
    <source>
    </source>
</evidence>
<organism>
    <name type="scientific">Mus musculus</name>
    <name type="common">Mouse</name>
    <dbReference type="NCBI Taxonomy" id="10090"/>
    <lineage>
        <taxon>Eukaryota</taxon>
        <taxon>Metazoa</taxon>
        <taxon>Chordata</taxon>
        <taxon>Craniata</taxon>
        <taxon>Vertebrata</taxon>
        <taxon>Euteleostomi</taxon>
        <taxon>Mammalia</taxon>
        <taxon>Eutheria</taxon>
        <taxon>Euarchontoglires</taxon>
        <taxon>Glires</taxon>
        <taxon>Rodentia</taxon>
        <taxon>Myomorpha</taxon>
        <taxon>Muroidea</taxon>
        <taxon>Muridae</taxon>
        <taxon>Murinae</taxon>
        <taxon>Mus</taxon>
        <taxon>Mus</taxon>
    </lineage>
</organism>
<comment type="function">
    <text evidence="2 6 7">Palmitoyltransferase that catalyzes the addition of palmitate onto various protein substrates, such as CGAS, HRAS and LCK (PubMed:15603741, PubMed:35438208). Palmitoylates HRAS and LCK (PubMed:15603741). Acts as a negative regulator of the cGAS-STING pathway be mediating palmitoylation and inactivation of CGAS (PubMed:35438208). May also have a palmitoyltransferase activity toward the beta-2 adrenergic receptor/ADRB2 and therefore regulate G protein-coupled receptor signaling (By similarity).</text>
</comment>
<comment type="catalytic activity">
    <reaction evidence="11">
        <text>L-cysteinyl-[protein] + hexadecanoyl-CoA = S-hexadecanoyl-L-cysteinyl-[protein] + CoA</text>
        <dbReference type="Rhea" id="RHEA:36683"/>
        <dbReference type="Rhea" id="RHEA-COMP:10131"/>
        <dbReference type="Rhea" id="RHEA-COMP:11032"/>
        <dbReference type="ChEBI" id="CHEBI:29950"/>
        <dbReference type="ChEBI" id="CHEBI:57287"/>
        <dbReference type="ChEBI" id="CHEBI:57379"/>
        <dbReference type="ChEBI" id="CHEBI:74151"/>
        <dbReference type="EC" id="2.3.1.225"/>
    </reaction>
    <physiologicalReaction direction="left-to-right" evidence="11">
        <dbReference type="Rhea" id="RHEA:36684"/>
    </physiologicalReaction>
</comment>
<comment type="subcellular location">
    <subcellularLocation>
        <location evidence="2">Golgi apparatus membrane</location>
        <topology evidence="3">Multi-pass membrane protein</topology>
    </subcellularLocation>
</comment>
<comment type="tissue specificity">
    <text evidence="6">Ubiquitously expressed.</text>
</comment>
<comment type="domain">
    <text evidence="1">The DHHC domain is required for palmitoyltransferase activity.</text>
</comment>
<comment type="disruption phenotype">
    <text evidence="7">Mice were born at the expected Mendelian ratio, develop normally and are fertile (PubMed:35438208). Mice display increased resistance to infection by DNA viruses due to increased activation of the cGAS-STING pathway (PubMed:35438208).</text>
</comment>
<comment type="similarity">
    <text evidence="10">Belongs to the DHHC palmitoyltransferase family. ERF2/ZDHHC9 subfamily.</text>
</comment>
<keyword id="KW-0012">Acyltransferase</keyword>
<keyword id="KW-0333">Golgi apparatus</keyword>
<keyword id="KW-0391">Immunity</keyword>
<keyword id="KW-0399">Innate immunity</keyword>
<keyword id="KW-0449">Lipoprotein</keyword>
<keyword id="KW-0472">Membrane</keyword>
<keyword id="KW-0564">Palmitate</keyword>
<keyword id="KW-0597">Phosphoprotein</keyword>
<keyword id="KW-1185">Reference proteome</keyword>
<keyword id="KW-0808">Transferase</keyword>
<keyword id="KW-0812">Transmembrane</keyword>
<keyword id="KW-1133">Transmembrane helix</keyword>
<gene>
    <name evidence="9 12" type="primary">Zdhhc18</name>
</gene>
<dbReference type="EC" id="2.3.1.225" evidence="11"/>
<dbReference type="EMBL" id="AL627228">
    <property type="status" value="NOT_ANNOTATED_CDS"/>
    <property type="molecule type" value="Genomic_DNA"/>
</dbReference>
<dbReference type="EMBL" id="BX537327">
    <property type="status" value="NOT_ANNOTATED_CDS"/>
    <property type="molecule type" value="Genomic_DNA"/>
</dbReference>
<dbReference type="EMBL" id="BF582271">
    <property type="status" value="NOT_ANNOTATED_CDS"/>
    <property type="molecule type" value="mRNA"/>
</dbReference>
<dbReference type="EMBL" id="CJ065144">
    <property type="status" value="NOT_ANNOTATED_CDS"/>
    <property type="molecule type" value="mRNA"/>
</dbReference>
<dbReference type="EMBL" id="AY668950">
    <property type="protein sequence ID" value="AAU89704.1"/>
    <property type="molecule type" value="mRNA"/>
</dbReference>
<dbReference type="CCDS" id="CCDS38906.1"/>
<dbReference type="RefSeq" id="NP_001017968.2">
    <property type="nucleotide sequence ID" value="NM_001017968.2"/>
</dbReference>
<dbReference type="SMR" id="Q5Y5T2"/>
<dbReference type="FunCoup" id="Q5Y5T2">
    <property type="interactions" value="941"/>
</dbReference>
<dbReference type="STRING" id="10090.ENSMUSP00000081260"/>
<dbReference type="iPTMnet" id="Q5Y5T2"/>
<dbReference type="PhosphoSitePlus" id="Q5Y5T2"/>
<dbReference type="SwissPalm" id="Q5Y5T2"/>
<dbReference type="PaxDb" id="10090-ENSMUSP00000081260"/>
<dbReference type="PeptideAtlas" id="Q5Y5T2"/>
<dbReference type="ProteomicsDB" id="302050"/>
<dbReference type="Antibodypedia" id="46760">
    <property type="antibodies" value="98 antibodies from 25 providers"/>
</dbReference>
<dbReference type="DNASU" id="503610"/>
<dbReference type="Ensembl" id="ENSMUST00000084238.5">
    <property type="protein sequence ID" value="ENSMUSP00000081260.5"/>
    <property type="gene ID" value="ENSMUSG00000037553.15"/>
</dbReference>
<dbReference type="GeneID" id="503610"/>
<dbReference type="KEGG" id="mmu:503610"/>
<dbReference type="UCSC" id="uc008vde.1">
    <property type="organism name" value="mouse"/>
</dbReference>
<dbReference type="AGR" id="MGI:3527792"/>
<dbReference type="CTD" id="84243"/>
<dbReference type="MGI" id="MGI:3527792">
    <property type="gene designation" value="Zdhhc18"/>
</dbReference>
<dbReference type="VEuPathDB" id="HostDB:ENSMUSG00000037553"/>
<dbReference type="eggNOG" id="KOG1311">
    <property type="taxonomic scope" value="Eukaryota"/>
</dbReference>
<dbReference type="GeneTree" id="ENSGT00940000156585"/>
<dbReference type="HOGENOM" id="CLU_018741_3_1_1"/>
<dbReference type="InParanoid" id="Q5Y5T2"/>
<dbReference type="OMA" id="NDAHMCT"/>
<dbReference type="OrthoDB" id="4096362at2759"/>
<dbReference type="PhylomeDB" id="Q5Y5T2"/>
<dbReference type="TreeFam" id="TF312923"/>
<dbReference type="BioGRID-ORCS" id="503610">
    <property type="hits" value="4 hits in 80 CRISPR screens"/>
</dbReference>
<dbReference type="ChiTaRS" id="Zdhhc18">
    <property type="organism name" value="mouse"/>
</dbReference>
<dbReference type="PRO" id="PR:Q5Y5T2"/>
<dbReference type="Proteomes" id="UP000000589">
    <property type="component" value="Chromosome 4"/>
</dbReference>
<dbReference type="RNAct" id="Q5Y5T2">
    <property type="molecule type" value="protein"/>
</dbReference>
<dbReference type="Bgee" id="ENSMUSG00000037553">
    <property type="expression patterns" value="Expressed in granulocyte and 217 other cell types or tissues"/>
</dbReference>
<dbReference type="GO" id="GO:0005829">
    <property type="term" value="C:cytosol"/>
    <property type="evidence" value="ECO:0007669"/>
    <property type="project" value="Ensembl"/>
</dbReference>
<dbReference type="GO" id="GO:0005794">
    <property type="term" value="C:Golgi apparatus"/>
    <property type="evidence" value="ECO:0000250"/>
    <property type="project" value="UniProtKB"/>
</dbReference>
<dbReference type="GO" id="GO:0000139">
    <property type="term" value="C:Golgi membrane"/>
    <property type="evidence" value="ECO:0007669"/>
    <property type="project" value="UniProtKB-SubCell"/>
</dbReference>
<dbReference type="GO" id="GO:0016409">
    <property type="term" value="F:palmitoyltransferase activity"/>
    <property type="evidence" value="ECO:0000314"/>
    <property type="project" value="MGI"/>
</dbReference>
<dbReference type="GO" id="GO:0019706">
    <property type="term" value="F:protein-cysteine S-palmitoyltransferase activity"/>
    <property type="evidence" value="ECO:0000250"/>
    <property type="project" value="UniProtKB"/>
</dbReference>
<dbReference type="GO" id="GO:0045087">
    <property type="term" value="P:innate immune response"/>
    <property type="evidence" value="ECO:0007669"/>
    <property type="project" value="UniProtKB-KW"/>
</dbReference>
<dbReference type="GO" id="GO:0160049">
    <property type="term" value="P:negative regulation of cGAS/STING signaling pathway"/>
    <property type="evidence" value="ECO:0007669"/>
    <property type="project" value="Ensembl"/>
</dbReference>
<dbReference type="GO" id="GO:0045824">
    <property type="term" value="P:negative regulation of innate immune response"/>
    <property type="evidence" value="ECO:0000250"/>
    <property type="project" value="UniProtKB"/>
</dbReference>
<dbReference type="GO" id="GO:0018230">
    <property type="term" value="P:peptidyl-L-cysteine S-palmitoylation"/>
    <property type="evidence" value="ECO:0000250"/>
    <property type="project" value="UniProtKB"/>
</dbReference>
<dbReference type="GO" id="GO:0008104">
    <property type="term" value="P:protein localization"/>
    <property type="evidence" value="ECO:0000314"/>
    <property type="project" value="MGI"/>
</dbReference>
<dbReference type="InterPro" id="IPR001594">
    <property type="entry name" value="Palmitoyltrfase_DHHC"/>
</dbReference>
<dbReference type="InterPro" id="IPR039859">
    <property type="entry name" value="PFA4/ZDH16/20/ERF2-like"/>
</dbReference>
<dbReference type="PANTHER" id="PTHR22883:SF257">
    <property type="entry name" value="PALMITOYLTRANSFERASE ZDHHC18"/>
    <property type="match status" value="1"/>
</dbReference>
<dbReference type="PANTHER" id="PTHR22883">
    <property type="entry name" value="ZINC FINGER DHHC DOMAIN CONTAINING PROTEIN"/>
    <property type="match status" value="1"/>
</dbReference>
<dbReference type="Pfam" id="PF01529">
    <property type="entry name" value="DHHC"/>
    <property type="match status" value="1"/>
</dbReference>
<dbReference type="PROSITE" id="PS50216">
    <property type="entry name" value="DHHC"/>
    <property type="match status" value="1"/>
</dbReference>
<accession>Q5Y5T2</accession>
<accession>A2A9F0</accession>
<name>ZDH18_MOUSE</name>
<proteinExistence type="evidence at protein level"/>
<protein>
    <recommendedName>
        <fullName evidence="10">Palmitoyltransferase ZDHHC18</fullName>
        <ecNumber evidence="11">2.3.1.225</ecNumber>
    </recommendedName>
    <alternativeName>
        <fullName evidence="8">DHHC domain-containing cysteine-rich protein 18</fullName>
        <shortName evidence="8">DHHC-18</shortName>
    </alternativeName>
    <alternativeName>
        <fullName evidence="12">Zinc finger DHHC domain-containing protein 18</fullName>
    </alternativeName>
</protein>
<sequence>MKDCEYQQISPGAAPPPASPGARRPGPAAPPAPSPGPAPGAPRWSGSGSGSGSLGRRPRRKWEVFPGRNRFYCGGRLMLAGHGGVFALTLLLILSTTILFFVFDCPYLARTLTLAIPIIAAILFFFVMSCLLQTSFTDPGILPRATICEAAALEKQIDNTGSSTYRPPPRTREVMINGQTVKLKYCFTCKMFRPPRTSHCSVCDNCVERFDHHCPWVGNCVGRRNYRFFYAFILSLSFLTAFIFACVVTHLTLLSQGSNFLSALKKTPASVLELVICFFSIWSILGLSGFHTYLVASNLTTNEDIKGSWSSKRGGEASVNPYSHKSIITNCCAVLCGPLPPSLIDRRGFVQSDTALPSPIRSDDPACGAKPDASMVGGHP</sequence>
<feature type="chain" id="PRO_0000212903" description="Palmitoyltransferase ZDHHC18">
    <location>
        <begin position="1"/>
        <end position="380"/>
    </location>
</feature>
<feature type="topological domain" description="Cytoplasmic" evidence="10">
    <location>
        <begin position="1"/>
        <end position="82"/>
    </location>
</feature>
<feature type="transmembrane region" description="Helical" evidence="3">
    <location>
        <begin position="83"/>
        <end position="103"/>
    </location>
</feature>
<feature type="topological domain" description="Lumenal" evidence="10">
    <location>
        <begin position="104"/>
        <end position="111"/>
    </location>
</feature>
<feature type="transmembrane region" description="Helical" evidence="3">
    <location>
        <begin position="112"/>
        <end position="132"/>
    </location>
</feature>
<feature type="topological domain" description="Cytoplasmic" evidence="10">
    <location>
        <begin position="133"/>
        <end position="227"/>
    </location>
</feature>
<feature type="transmembrane region" description="Helical" evidence="3">
    <location>
        <begin position="228"/>
        <end position="248"/>
    </location>
</feature>
<feature type="topological domain" description="Lumenal" evidence="10">
    <location>
        <begin position="249"/>
        <end position="269"/>
    </location>
</feature>
<feature type="transmembrane region" description="Helical" evidence="3">
    <location>
        <begin position="270"/>
        <end position="290"/>
    </location>
</feature>
<feature type="topological domain" description="Cytoplasmic" evidence="10">
    <location>
        <begin position="291"/>
        <end position="380"/>
    </location>
</feature>
<feature type="domain" description="DHHC" evidence="4">
    <location>
        <begin position="184"/>
        <end position="234"/>
    </location>
</feature>
<feature type="region of interest" description="Disordered" evidence="5">
    <location>
        <begin position="1"/>
        <end position="59"/>
    </location>
</feature>
<feature type="region of interest" description="Disordered" evidence="5">
    <location>
        <begin position="355"/>
        <end position="380"/>
    </location>
</feature>
<feature type="compositionally biased region" description="Pro residues" evidence="5">
    <location>
        <begin position="27"/>
        <end position="40"/>
    </location>
</feature>
<feature type="active site" description="S-palmitoyl cysteine intermediate" evidence="4">
    <location>
        <position position="214"/>
    </location>
</feature>
<feature type="modified residue" description="Phosphoserine" evidence="13">
    <location>
        <position position="19"/>
    </location>
</feature>